<protein>
    <recommendedName>
        <fullName evidence="1">Large ribosomal subunit protein bL32</fullName>
    </recommendedName>
    <alternativeName>
        <fullName evidence="3">50S ribosomal protein L32</fullName>
    </alternativeName>
</protein>
<accession>Q2YA48</accession>
<proteinExistence type="inferred from homology"/>
<name>RL32_NITMU</name>
<dbReference type="EMBL" id="CP000103">
    <property type="protein sequence ID" value="ABB74373.1"/>
    <property type="molecule type" value="Genomic_DNA"/>
</dbReference>
<dbReference type="RefSeq" id="WP_011380418.1">
    <property type="nucleotide sequence ID" value="NC_007614.1"/>
</dbReference>
<dbReference type="SMR" id="Q2YA48"/>
<dbReference type="STRING" id="323848.Nmul_A1070"/>
<dbReference type="KEGG" id="nmu:Nmul_A1070"/>
<dbReference type="eggNOG" id="COG0333">
    <property type="taxonomic scope" value="Bacteria"/>
</dbReference>
<dbReference type="HOGENOM" id="CLU_129084_2_1_4"/>
<dbReference type="OrthoDB" id="9801927at2"/>
<dbReference type="Proteomes" id="UP000002718">
    <property type="component" value="Chromosome"/>
</dbReference>
<dbReference type="GO" id="GO:0015934">
    <property type="term" value="C:large ribosomal subunit"/>
    <property type="evidence" value="ECO:0007669"/>
    <property type="project" value="InterPro"/>
</dbReference>
<dbReference type="GO" id="GO:0003735">
    <property type="term" value="F:structural constituent of ribosome"/>
    <property type="evidence" value="ECO:0007669"/>
    <property type="project" value="InterPro"/>
</dbReference>
<dbReference type="GO" id="GO:0006412">
    <property type="term" value="P:translation"/>
    <property type="evidence" value="ECO:0007669"/>
    <property type="project" value="UniProtKB-UniRule"/>
</dbReference>
<dbReference type="HAMAP" id="MF_00340">
    <property type="entry name" value="Ribosomal_bL32"/>
    <property type="match status" value="1"/>
</dbReference>
<dbReference type="InterPro" id="IPR002677">
    <property type="entry name" value="Ribosomal_bL32"/>
</dbReference>
<dbReference type="InterPro" id="IPR044957">
    <property type="entry name" value="Ribosomal_bL32_bact"/>
</dbReference>
<dbReference type="InterPro" id="IPR011332">
    <property type="entry name" value="Ribosomal_zn-bd"/>
</dbReference>
<dbReference type="NCBIfam" id="TIGR01031">
    <property type="entry name" value="rpmF_bact"/>
    <property type="match status" value="1"/>
</dbReference>
<dbReference type="PANTHER" id="PTHR35534">
    <property type="entry name" value="50S RIBOSOMAL PROTEIN L32"/>
    <property type="match status" value="1"/>
</dbReference>
<dbReference type="PANTHER" id="PTHR35534:SF1">
    <property type="entry name" value="LARGE RIBOSOMAL SUBUNIT PROTEIN BL32"/>
    <property type="match status" value="1"/>
</dbReference>
<dbReference type="Pfam" id="PF01783">
    <property type="entry name" value="Ribosomal_L32p"/>
    <property type="match status" value="1"/>
</dbReference>
<dbReference type="SUPFAM" id="SSF57829">
    <property type="entry name" value="Zn-binding ribosomal proteins"/>
    <property type="match status" value="1"/>
</dbReference>
<sequence length="59" mass="6753">MAVQQNKKSPSKRGMHRSHDFLRTTPLSVDPGTGEVHLRHHISPNGYYRGKKVIKTKED</sequence>
<evidence type="ECO:0000255" key="1">
    <source>
        <dbReference type="HAMAP-Rule" id="MF_00340"/>
    </source>
</evidence>
<evidence type="ECO:0000256" key="2">
    <source>
        <dbReference type="SAM" id="MobiDB-lite"/>
    </source>
</evidence>
<evidence type="ECO:0000305" key="3"/>
<comment type="similarity">
    <text evidence="1">Belongs to the bacterial ribosomal protein bL32 family.</text>
</comment>
<gene>
    <name evidence="1" type="primary">rpmF</name>
    <name type="ordered locus">Nmul_A1070</name>
</gene>
<reference key="1">
    <citation type="submission" date="2005-08" db="EMBL/GenBank/DDBJ databases">
        <title>Complete sequence of chromosome 1 of Nitrosospira multiformis ATCC 25196.</title>
        <authorList>
            <person name="Copeland A."/>
            <person name="Lucas S."/>
            <person name="Lapidus A."/>
            <person name="Barry K."/>
            <person name="Detter J.C."/>
            <person name="Glavina T."/>
            <person name="Hammon N."/>
            <person name="Israni S."/>
            <person name="Pitluck S."/>
            <person name="Chain P."/>
            <person name="Malfatti S."/>
            <person name="Shin M."/>
            <person name="Vergez L."/>
            <person name="Schmutz J."/>
            <person name="Larimer F."/>
            <person name="Land M."/>
            <person name="Hauser L."/>
            <person name="Kyrpides N."/>
            <person name="Lykidis A."/>
            <person name="Richardson P."/>
        </authorList>
    </citation>
    <scope>NUCLEOTIDE SEQUENCE [LARGE SCALE GENOMIC DNA]</scope>
    <source>
        <strain>ATCC 25196 / NCIMB 11849 / C 71</strain>
    </source>
</reference>
<organism>
    <name type="scientific">Nitrosospira multiformis (strain ATCC 25196 / NCIMB 11849 / C 71)</name>
    <dbReference type="NCBI Taxonomy" id="323848"/>
    <lineage>
        <taxon>Bacteria</taxon>
        <taxon>Pseudomonadati</taxon>
        <taxon>Pseudomonadota</taxon>
        <taxon>Betaproteobacteria</taxon>
        <taxon>Nitrosomonadales</taxon>
        <taxon>Nitrosomonadaceae</taxon>
        <taxon>Nitrosospira</taxon>
    </lineage>
</organism>
<keyword id="KW-1185">Reference proteome</keyword>
<keyword id="KW-0687">Ribonucleoprotein</keyword>
<keyword id="KW-0689">Ribosomal protein</keyword>
<feature type="chain" id="PRO_0000296517" description="Large ribosomal subunit protein bL32">
    <location>
        <begin position="1"/>
        <end position="59"/>
    </location>
</feature>
<feature type="region of interest" description="Disordered" evidence="2">
    <location>
        <begin position="1"/>
        <end position="40"/>
    </location>
</feature>